<keyword id="KW-0010">Activator</keyword>
<keyword id="KW-0238">DNA-binding</keyword>
<keyword id="KW-0256">Endoplasmic reticulum</keyword>
<keyword id="KW-0325">Glycoprotein</keyword>
<keyword id="KW-1017">Isopeptide bond</keyword>
<keyword id="KW-0472">Membrane</keyword>
<keyword id="KW-0539">Nucleus</keyword>
<keyword id="KW-1185">Reference proteome</keyword>
<keyword id="KW-0735">Signal-anchor</keyword>
<keyword id="KW-0804">Transcription</keyword>
<keyword id="KW-0805">Transcription regulation</keyword>
<keyword id="KW-0812">Transmembrane</keyword>
<keyword id="KW-1133">Transmembrane helix</keyword>
<keyword id="KW-0832">Ubl conjugation</keyword>
<keyword id="KW-0834">Unfolded protein response</keyword>
<dbReference type="EMBL" id="BC089877">
    <property type="protein sequence ID" value="AAH89877.1"/>
    <property type="molecule type" value="mRNA"/>
</dbReference>
<dbReference type="RefSeq" id="NP_001012115.1">
    <property type="nucleotide sequence ID" value="NM_001012115.1"/>
</dbReference>
<dbReference type="SMR" id="Q5FVM5"/>
<dbReference type="FunCoup" id="Q5FVM5">
    <property type="interactions" value="196"/>
</dbReference>
<dbReference type="STRING" id="10116.ENSRNOP00000044840"/>
<dbReference type="GlyCosmos" id="Q5FVM5">
    <property type="glycosylation" value="2 sites, No reported glycans"/>
</dbReference>
<dbReference type="GlyGen" id="Q5FVM5">
    <property type="glycosylation" value="3 sites"/>
</dbReference>
<dbReference type="PhosphoSitePlus" id="Q5FVM5"/>
<dbReference type="PaxDb" id="10116-ENSRNOP00000044840"/>
<dbReference type="Ensembl" id="ENSRNOT00000044484.4">
    <property type="protein sequence ID" value="ENSRNOP00000044840.3"/>
    <property type="gene ID" value="ENSRNOG00000032202.4"/>
</dbReference>
<dbReference type="GeneID" id="314638"/>
<dbReference type="KEGG" id="rno:314638"/>
<dbReference type="UCSC" id="RGD:1308152">
    <property type="organism name" value="rat"/>
</dbReference>
<dbReference type="AGR" id="RGD:1308152"/>
<dbReference type="CTD" id="84699"/>
<dbReference type="RGD" id="1308152">
    <property type="gene designation" value="Creb3l3"/>
</dbReference>
<dbReference type="eggNOG" id="KOG0709">
    <property type="taxonomic scope" value="Eukaryota"/>
</dbReference>
<dbReference type="GeneTree" id="ENSGT00940000159261"/>
<dbReference type="HOGENOM" id="CLU_047257_1_0_1"/>
<dbReference type="InParanoid" id="Q5FVM5"/>
<dbReference type="OMA" id="DSHFFGT"/>
<dbReference type="OrthoDB" id="80018at9989"/>
<dbReference type="PhylomeDB" id="Q5FVM5"/>
<dbReference type="TreeFam" id="TF316079"/>
<dbReference type="Reactome" id="R-RNO-8874211">
    <property type="pathway name" value="CREB3 factors activate genes"/>
</dbReference>
<dbReference type="PRO" id="PR:Q5FVM5"/>
<dbReference type="Proteomes" id="UP000002494">
    <property type="component" value="Chromosome 7"/>
</dbReference>
<dbReference type="Bgee" id="ENSRNOG00000032202">
    <property type="expression patterns" value="Expressed in liver and 10 other cell types or tissues"/>
</dbReference>
<dbReference type="GO" id="GO:0005783">
    <property type="term" value="C:endoplasmic reticulum"/>
    <property type="evidence" value="ECO:0000266"/>
    <property type="project" value="RGD"/>
</dbReference>
<dbReference type="GO" id="GO:0005789">
    <property type="term" value="C:endoplasmic reticulum membrane"/>
    <property type="evidence" value="ECO:0007669"/>
    <property type="project" value="UniProtKB-SubCell"/>
</dbReference>
<dbReference type="GO" id="GO:0016020">
    <property type="term" value="C:membrane"/>
    <property type="evidence" value="ECO:0000266"/>
    <property type="project" value="RGD"/>
</dbReference>
<dbReference type="GO" id="GO:0005634">
    <property type="term" value="C:nucleus"/>
    <property type="evidence" value="ECO:0000266"/>
    <property type="project" value="RGD"/>
</dbReference>
<dbReference type="GO" id="GO:0001228">
    <property type="term" value="F:DNA-binding transcription activator activity, RNA polymerase II-specific"/>
    <property type="evidence" value="ECO:0000266"/>
    <property type="project" value="RGD"/>
</dbReference>
<dbReference type="GO" id="GO:0000981">
    <property type="term" value="F:DNA-binding transcription factor activity, RNA polymerase II-specific"/>
    <property type="evidence" value="ECO:0000318"/>
    <property type="project" value="GO_Central"/>
</dbReference>
<dbReference type="GO" id="GO:0042802">
    <property type="term" value="F:identical protein binding"/>
    <property type="evidence" value="ECO:0000266"/>
    <property type="project" value="RGD"/>
</dbReference>
<dbReference type="GO" id="GO:0046982">
    <property type="term" value="F:protein heterodimerization activity"/>
    <property type="evidence" value="ECO:0000266"/>
    <property type="project" value="RGD"/>
</dbReference>
<dbReference type="GO" id="GO:0042803">
    <property type="term" value="F:protein homodimerization activity"/>
    <property type="evidence" value="ECO:0000266"/>
    <property type="project" value="RGD"/>
</dbReference>
<dbReference type="GO" id="GO:0000978">
    <property type="term" value="F:RNA polymerase II cis-regulatory region sequence-specific DNA binding"/>
    <property type="evidence" value="ECO:0000318"/>
    <property type="project" value="GO_Central"/>
</dbReference>
<dbReference type="GO" id="GO:0000977">
    <property type="term" value="F:RNA polymerase II transcription regulatory region sequence-specific DNA binding"/>
    <property type="evidence" value="ECO:0000266"/>
    <property type="project" value="RGD"/>
</dbReference>
<dbReference type="GO" id="GO:0000976">
    <property type="term" value="F:transcription cis-regulatory region binding"/>
    <property type="evidence" value="ECO:0000266"/>
    <property type="project" value="RGD"/>
</dbReference>
<dbReference type="GO" id="GO:0045944">
    <property type="term" value="P:positive regulation of transcription by RNA polymerase II"/>
    <property type="evidence" value="ECO:0000266"/>
    <property type="project" value="RGD"/>
</dbReference>
<dbReference type="GO" id="GO:0006357">
    <property type="term" value="P:regulation of transcription by RNA polymerase II"/>
    <property type="evidence" value="ECO:0000318"/>
    <property type="project" value="GO_Central"/>
</dbReference>
<dbReference type="GO" id="GO:0034976">
    <property type="term" value="P:response to endoplasmic reticulum stress"/>
    <property type="evidence" value="ECO:0000266"/>
    <property type="project" value="RGD"/>
</dbReference>
<dbReference type="GO" id="GO:0006986">
    <property type="term" value="P:response to unfolded protein"/>
    <property type="evidence" value="ECO:0007669"/>
    <property type="project" value="UniProtKB-KW"/>
</dbReference>
<dbReference type="CDD" id="cd14689">
    <property type="entry name" value="bZIP_CREB3"/>
    <property type="match status" value="1"/>
</dbReference>
<dbReference type="FunFam" id="1.20.5.170:FF:000042">
    <property type="entry name" value="Cyclic AMP-responsive element-binding protein 3-like protein 3"/>
    <property type="match status" value="1"/>
</dbReference>
<dbReference type="Gene3D" id="1.20.5.170">
    <property type="match status" value="1"/>
</dbReference>
<dbReference type="InterPro" id="IPR004827">
    <property type="entry name" value="bZIP"/>
</dbReference>
<dbReference type="InterPro" id="IPR046347">
    <property type="entry name" value="bZIP_sf"/>
</dbReference>
<dbReference type="InterPro" id="IPR051381">
    <property type="entry name" value="CREB_ATF_subfamily"/>
</dbReference>
<dbReference type="PANTHER" id="PTHR45996">
    <property type="entry name" value="AGAP001464-PB"/>
    <property type="match status" value="1"/>
</dbReference>
<dbReference type="PANTHER" id="PTHR45996:SF1">
    <property type="entry name" value="CYCLIC AMP-RESPONSIVE ELEMENT-BINDING PROTEIN 3-LIKE PROTEIN 3"/>
    <property type="match status" value="1"/>
</dbReference>
<dbReference type="Pfam" id="PF00170">
    <property type="entry name" value="bZIP_1"/>
    <property type="match status" value="1"/>
</dbReference>
<dbReference type="SMART" id="SM00338">
    <property type="entry name" value="BRLZ"/>
    <property type="match status" value="1"/>
</dbReference>
<dbReference type="SUPFAM" id="SSF57959">
    <property type="entry name" value="Leucine zipper domain"/>
    <property type="match status" value="1"/>
</dbReference>
<dbReference type="PROSITE" id="PS50217">
    <property type="entry name" value="BZIP"/>
    <property type="match status" value="1"/>
</dbReference>
<dbReference type="PROSITE" id="PS00036">
    <property type="entry name" value="BZIP_BASIC"/>
    <property type="match status" value="1"/>
</dbReference>
<sequence length="470" mass="50862">MDGDISTGKMASPACAMAPLDSMEVLDLLFDGQDGILRNVDLAESWILTREEQKVLPNSDSDEFLNSILGPGDSDPSSPIWSPADSDSGISEDLPSDSQDTPPGSGPGSANVAARCHPSKQGEGPCPSYLPSTACPEPPRTQVHESSVAIDLDMWSTDTLYPEEQAGSPSRFNLTVKELLLSGGGGDLQQHPLAASQLLGPGSGHCQELVLTEDEKKLLAKEGVTLPTQLPLTKYEERVLKKIRRKIRNKQSAQESRKKKKEYIDGLENRMSACTAQNQELQRKVLHLEKQNLSLLEQLKHLQALVVQSTSKPAHAGTCIAVLLLSFVLIILPSISPFTANKVDSPGDFIPVRVFSRTLHNHAASRVAPDVTPGPEVPGPHKGSSGGLSADWGNFLEIPMLDDPTEELDNTTLVLANSTEDLGRATLLDWVASEPLLGQMGLEIPGEEIWLSWVPRWLRVRVVQDALGVL</sequence>
<organism>
    <name type="scientific">Rattus norvegicus</name>
    <name type="common">Rat</name>
    <dbReference type="NCBI Taxonomy" id="10116"/>
    <lineage>
        <taxon>Eukaryota</taxon>
        <taxon>Metazoa</taxon>
        <taxon>Chordata</taxon>
        <taxon>Craniata</taxon>
        <taxon>Vertebrata</taxon>
        <taxon>Euteleostomi</taxon>
        <taxon>Mammalia</taxon>
        <taxon>Eutheria</taxon>
        <taxon>Euarchontoglires</taxon>
        <taxon>Glires</taxon>
        <taxon>Rodentia</taxon>
        <taxon>Myomorpha</taxon>
        <taxon>Muroidea</taxon>
        <taxon>Muridae</taxon>
        <taxon>Murinae</taxon>
        <taxon>Rattus</taxon>
    </lineage>
</organism>
<protein>
    <recommendedName>
        <fullName>Cyclic AMP-responsive element-binding protein 3-like protein 3</fullName>
        <shortName>cAMP-responsive element-binding protein 3-like protein 3</shortName>
    </recommendedName>
    <alternativeName>
        <fullName>Transcription factor CREB-H</fullName>
    </alternativeName>
    <component>
        <recommendedName>
            <fullName>Processed cyclic AMP-responsive element-binding protein 3-like protein 3</fullName>
        </recommendedName>
    </component>
</protein>
<gene>
    <name type="primary">Creb3l3</name>
</gene>
<comment type="function">
    <text evidence="1 3 7">Transcription factor that may act during endoplasmic reticulum stress by activating unfolded protein response target genes. Activated in response to cAMP stimulation. Binds the cAMP response element (CRE). Activates transcription through box-B element and CRE. Seems to function synergistically with ATF6. In acute inflammatory response, may activate expression of acute phase response (APR) genes (By similarity). May be involved in growth suppression. Regulates FGF21 transcription (By similarity). Plays a crucial role in the regulation of triglyceride metabolism and is required for the maintenance of normal plasma triglyceride concentrations (By similarity).</text>
</comment>
<comment type="subunit">
    <text evidence="1 2 3">Binds DNA as a dimer. May form homodimers (By similarity). Interacts with ATF6 (By similarity). Interacts with SYNV1/HRD1; this interaction leads to CREB3L3 ubiquitination and proteasomal degradation (By similarity).</text>
</comment>
<comment type="subcellular location">
    <subcellularLocation>
        <location evidence="2">Endoplasmic reticulum membrane</location>
        <topology evidence="2">Single-pass type II membrane protein</topology>
    </subcellularLocation>
</comment>
<comment type="subcellular location">
    <molecule>Processed cyclic AMP-responsive element-binding protein 3-like protein 3</molecule>
    <subcellularLocation>
        <location evidence="5">Nucleus</location>
    </subcellularLocation>
    <text>Under ER stress the cleaved N-terminal cytoplasmic domain translocates into the nucleus.</text>
</comment>
<comment type="PTM">
    <text evidence="1">Controlled by regulated intramembrane proteolysis (RIP). Following ER stress a fragment containing the cytoplasmic transcription factor domain is released by proteolysis. The cleavage seems to be performed sequentially by site-1 and site-2 proteases (PS1 and PS2) (By similarity).</text>
</comment>
<comment type="PTM">
    <text evidence="1">N-glycosylation is required for optimal proteolytic activation.</text>
</comment>
<comment type="PTM">
    <text evidence="2">Ubiquitinated at Lys-290 by SYNV1/HRD1 via 'Lys-27'-linked ubiquitin.</text>
</comment>
<comment type="similarity">
    <text evidence="8">Belongs to the bZIP family. ATF subfamily.</text>
</comment>
<proteinExistence type="evidence at transcript level"/>
<accession>Q5FVM5</accession>
<name>CR3L3_RAT</name>
<feature type="chain" id="PRO_0000288076" description="Cyclic AMP-responsive element-binding protein 3-like protein 3">
    <location>
        <begin position="1"/>
        <end position="470"/>
    </location>
</feature>
<feature type="chain" id="PRO_0000296217" description="Processed cyclic AMP-responsive element-binding protein 3-like protein 3">
    <location>
        <begin position="1"/>
        <end status="unknown"/>
    </location>
</feature>
<feature type="topological domain" description="Cytoplasmic" evidence="4">
    <location>
        <begin position="1"/>
        <end position="319"/>
    </location>
</feature>
<feature type="transmembrane region" description="Helical; Signal-anchor for type II membrane protein" evidence="4">
    <location>
        <begin position="320"/>
        <end position="340"/>
    </location>
</feature>
<feature type="topological domain" description="Lumenal" evidence="4">
    <location>
        <begin position="341"/>
        <end position="470"/>
    </location>
</feature>
<feature type="domain" description="bZIP" evidence="5">
    <location>
        <begin position="239"/>
        <end position="302"/>
    </location>
</feature>
<feature type="region of interest" description="Disordered" evidence="6">
    <location>
        <begin position="59"/>
        <end position="145"/>
    </location>
</feature>
<feature type="region of interest" description="Basic motif" evidence="5">
    <location>
        <begin position="241"/>
        <end position="270"/>
    </location>
</feature>
<feature type="region of interest" description="Leucine-zipper" evidence="5">
    <location>
        <begin position="281"/>
        <end position="302"/>
    </location>
</feature>
<feature type="site" description="Cleavage; by PS1" evidence="1">
    <location>
        <begin position="359"/>
        <end position="360"/>
    </location>
</feature>
<feature type="glycosylation site" description="N-linked (GlcNAc...) asparagine" evidence="4">
    <location>
        <position position="410"/>
    </location>
</feature>
<feature type="glycosylation site" description="N-linked (GlcNAc...) asparagine" evidence="4">
    <location>
        <position position="417"/>
    </location>
</feature>
<feature type="cross-link" description="Glycyl lysine isopeptide (Lys-Gly) (interchain with G-Cter in ubiquitin)" evidence="2">
    <location>
        <position position="290"/>
    </location>
</feature>
<evidence type="ECO:0000250" key="1"/>
<evidence type="ECO:0000250" key="2">
    <source>
        <dbReference type="UniProtKB" id="Q68CJ9"/>
    </source>
</evidence>
<evidence type="ECO:0000250" key="3">
    <source>
        <dbReference type="UniProtKB" id="Q91XE9"/>
    </source>
</evidence>
<evidence type="ECO:0000255" key="4"/>
<evidence type="ECO:0000255" key="5">
    <source>
        <dbReference type="PROSITE-ProRule" id="PRU00978"/>
    </source>
</evidence>
<evidence type="ECO:0000256" key="6">
    <source>
        <dbReference type="SAM" id="MobiDB-lite"/>
    </source>
</evidence>
<evidence type="ECO:0000269" key="7">
    <source>
    </source>
</evidence>
<evidence type="ECO:0000305" key="8"/>
<reference key="1">
    <citation type="journal article" date="2004" name="Genome Res.">
        <title>The status, quality, and expansion of the NIH full-length cDNA project: the Mammalian Gene Collection (MGC).</title>
        <authorList>
            <consortium name="The MGC Project Team"/>
        </authorList>
    </citation>
    <scope>NUCLEOTIDE SEQUENCE [LARGE SCALE MRNA]</scope>
    <source>
        <tissue>Liver</tissue>
    </source>
</reference>
<reference key="2">
    <citation type="journal article" date="2005" name="Nucleic Acids Res.">
        <title>The liver-enriched transcription factor CREB-H is a growth suppressor protein underexpressed in hepatocellular carcinoma.</title>
        <authorList>
            <person name="Chin K.-T."/>
            <person name="Zhou H.-J."/>
            <person name="Wong C.-M."/>
            <person name="Lee J.M.-F."/>
            <person name="Chan C.-P."/>
            <person name="Qiang B.-Q."/>
            <person name="Yuan J.-G."/>
            <person name="Ng I.-O."/>
            <person name="Jin D.-Y."/>
        </authorList>
    </citation>
    <scope>FUNCTION</scope>
</reference>